<comment type="function">
    <text evidence="5 6 7 8">V region of the variable domain of immunoglobulin heavy chains that participates in the antigen recognition (PubMed:24600447). Immunoglobulins, also known as antibodies, are membrane-bound or secreted glycoproteins produced by B lymphocytes. In the recognition phase of humoral immunity, the membrane-bound immunoglobulins serve as receptors which, upon binding of a specific antigen, trigger the clonal expansion and differentiation of B lymphocytes into immunoglobulins-secreting plasma cells. Secreted immunoglobulins mediate the effector phase of humoral immunity, which results in the elimination of bound antigens (PubMed:20176268, PubMed:22158414). The antigen binding site is formed by the variable domain of one heavy chain, together with that of its associated light chain. Thus, each immunoglobulin has two antigen binding sites with remarkable affinity for a particular antigen. The variable domains are assembled by a process called V-(D)-J rearrangement and can then be subjected to somatic hypermutations which, after exposure to antigen and selection, allow affinity maturation for a particular antigen (PubMed:17576170, PubMed:20176268).</text>
</comment>
<comment type="subunit">
    <text evidence="6">Immunoglobulins are composed of two identical heavy chains and two identical light chains; disulfide-linked.</text>
</comment>
<comment type="subcellular location">
    <subcellularLocation>
        <location evidence="6 7">Secreted</location>
    </subcellularLocation>
    <subcellularLocation>
        <location evidence="6 7">Cell membrane</location>
    </subcellularLocation>
</comment>
<comment type="polymorphism">
    <text evidence="10">There are several alleles. The sequence shown is that of IMGT allele IGHV7-4-1*01.</text>
</comment>
<comment type="caution">
    <text evidence="10">For examples of full-length immunoglobulin heavy chains (of different isotypes) see AC P0DOX2, AC P0DOX3, AC P0DOX4, AC P0DOX5 and AC P0DOX6.</text>
</comment>
<evidence type="ECO:0000250" key="1">
    <source>
        <dbReference type="UniProtKB" id="P23083"/>
    </source>
</evidence>
<evidence type="ECO:0000255" key="2"/>
<evidence type="ECO:0000255" key="3">
    <source>
        <dbReference type="PROSITE-ProRule" id="PRU00114"/>
    </source>
</evidence>
<evidence type="ECO:0000303" key="4">
    <source>
    </source>
</evidence>
<evidence type="ECO:0000303" key="5">
    <source>
    </source>
</evidence>
<evidence type="ECO:0000303" key="6">
    <source>
    </source>
</evidence>
<evidence type="ECO:0000303" key="7">
    <source>
    </source>
</evidence>
<evidence type="ECO:0000303" key="8">
    <source>
    </source>
</evidence>
<evidence type="ECO:0000303" key="9">
    <source ref="3"/>
</evidence>
<evidence type="ECO:0000305" key="10"/>
<organism>
    <name type="scientific">Homo sapiens</name>
    <name type="common">Human</name>
    <dbReference type="NCBI Taxonomy" id="9606"/>
    <lineage>
        <taxon>Eukaryota</taxon>
        <taxon>Metazoa</taxon>
        <taxon>Chordata</taxon>
        <taxon>Craniata</taxon>
        <taxon>Vertebrata</taxon>
        <taxon>Euteleostomi</taxon>
        <taxon>Mammalia</taxon>
        <taxon>Eutheria</taxon>
        <taxon>Euarchontoglires</taxon>
        <taxon>Primates</taxon>
        <taxon>Haplorrhini</taxon>
        <taxon>Catarrhini</taxon>
        <taxon>Hominidae</taxon>
        <taxon>Homo</taxon>
    </lineage>
</organism>
<keyword id="KW-1064">Adaptive immunity</keyword>
<keyword id="KW-1003">Cell membrane</keyword>
<keyword id="KW-1015">Disulfide bond</keyword>
<keyword id="KW-0391">Immunity</keyword>
<keyword id="KW-1280">Immunoglobulin</keyword>
<keyword id="KW-0393">Immunoglobulin domain</keyword>
<keyword id="KW-0472">Membrane</keyword>
<keyword id="KW-1267">Proteomics identification</keyword>
<keyword id="KW-1185">Reference proteome</keyword>
<keyword id="KW-0964">Secreted</keyword>
<keyword id="KW-0732">Signal</keyword>
<name>HV741_HUMAN</name>
<reference key="1">
    <citation type="journal article" date="2003" name="Nature">
        <title>The DNA sequence and analysis of human chromosome 14.</title>
        <authorList>
            <person name="Heilig R."/>
            <person name="Eckenberg R."/>
            <person name="Petit J.-L."/>
            <person name="Fonknechten N."/>
            <person name="Da Silva C."/>
            <person name="Cattolico L."/>
            <person name="Levy M."/>
            <person name="Barbe V."/>
            <person name="De Berardinis V."/>
            <person name="Ureta-Vidal A."/>
            <person name="Pelletier E."/>
            <person name="Vico V."/>
            <person name="Anthouard V."/>
            <person name="Rowen L."/>
            <person name="Madan A."/>
            <person name="Qin S."/>
            <person name="Sun H."/>
            <person name="Du H."/>
            <person name="Pepin K."/>
            <person name="Artiguenave F."/>
            <person name="Robert C."/>
            <person name="Cruaud C."/>
            <person name="Bruels T."/>
            <person name="Jaillon O."/>
            <person name="Friedlander L."/>
            <person name="Samson G."/>
            <person name="Brottier P."/>
            <person name="Cure S."/>
            <person name="Segurens B."/>
            <person name="Aniere F."/>
            <person name="Samain S."/>
            <person name="Crespeau H."/>
            <person name="Abbasi N."/>
            <person name="Aiach N."/>
            <person name="Boscus D."/>
            <person name="Dickhoff R."/>
            <person name="Dors M."/>
            <person name="Dubois I."/>
            <person name="Friedman C."/>
            <person name="Gouyvenoux M."/>
            <person name="James R."/>
            <person name="Madan A."/>
            <person name="Mairey-Estrada B."/>
            <person name="Mangenot S."/>
            <person name="Martins N."/>
            <person name="Menard M."/>
            <person name="Oztas S."/>
            <person name="Ratcliffe A."/>
            <person name="Shaffer T."/>
            <person name="Trask B."/>
            <person name="Vacherie B."/>
            <person name="Bellemere C."/>
            <person name="Belser C."/>
            <person name="Besnard-Gonnet M."/>
            <person name="Bartol-Mavel D."/>
            <person name="Boutard M."/>
            <person name="Briez-Silla S."/>
            <person name="Combette S."/>
            <person name="Dufosse-Laurent V."/>
            <person name="Ferron C."/>
            <person name="Lechaplais C."/>
            <person name="Louesse C."/>
            <person name="Muselet D."/>
            <person name="Magdelenat G."/>
            <person name="Pateau E."/>
            <person name="Petit E."/>
            <person name="Sirvain-Trukniewicz P."/>
            <person name="Trybou A."/>
            <person name="Vega-Czarny N."/>
            <person name="Bataille E."/>
            <person name="Bluet E."/>
            <person name="Bordelais I."/>
            <person name="Dubois M."/>
            <person name="Dumont C."/>
            <person name="Guerin T."/>
            <person name="Haffray S."/>
            <person name="Hammadi R."/>
            <person name="Muanga J."/>
            <person name="Pellouin V."/>
            <person name="Robert D."/>
            <person name="Wunderle E."/>
            <person name="Gauguet G."/>
            <person name="Roy A."/>
            <person name="Sainte-Marthe L."/>
            <person name="Verdier J."/>
            <person name="Verdier-Discala C."/>
            <person name="Hillier L.W."/>
            <person name="Fulton L."/>
            <person name="McPherson J."/>
            <person name="Matsuda F."/>
            <person name="Wilson R."/>
            <person name="Scarpelli C."/>
            <person name="Gyapay G."/>
            <person name="Wincker P."/>
            <person name="Saurin W."/>
            <person name="Quetier F."/>
            <person name="Waterston R."/>
            <person name="Hood L."/>
            <person name="Weissenbach J."/>
        </authorList>
    </citation>
    <scope>NUCLEOTIDE SEQUENCE [LARGE SCALE GENOMIC DNA] (IMGT ALLELE IGHV7-4-1*01)</scope>
</reference>
<reference key="2">
    <citation type="journal article" date="2001" name="Exp. Clin. Immunogenet.">
        <title>Nomenclature of the human immunoglobulin heavy (IGH) genes.</title>
        <authorList>
            <person name="Lefranc M.P."/>
        </authorList>
    </citation>
    <scope>NOMENCLATURE</scope>
</reference>
<reference key="3">
    <citation type="book" date="2001" name="The Immunoglobulin FactsBook.">
        <title>The Immunoglobulin FactsBook.</title>
        <editorList>
            <person name="Lefranc M.P."/>
            <person name="Lefranc G."/>
        </editorList>
        <authorList>
            <person name="Lefranc M.P."/>
            <person name="Lefranc G."/>
        </authorList>
    </citation>
    <scope>NOMENCLATURE</scope>
</reference>
<reference key="4">
    <citation type="journal article" date="2007" name="Annu. Rev. Genet.">
        <title>Immunoglobulin somatic hypermutation.</title>
        <authorList>
            <person name="Teng G."/>
            <person name="Papavasiliou F.N."/>
        </authorList>
    </citation>
    <scope>REVIEW ON SOMATIC HYPERMUTATION</scope>
</reference>
<reference key="5">
    <citation type="journal article" date="2010" name="J. Allergy Clin. Immunol.">
        <title>Structure and function of immunoglobulins.</title>
        <authorList>
            <person name="Schroeder H.W. Jr."/>
            <person name="Cavacini L."/>
        </authorList>
    </citation>
    <scope>REVIEW ON IMMUNOGLOBULINS</scope>
</reference>
<reference key="6">
    <citation type="journal article" date="2012" name="Nat. Rev. Immunol.">
        <title>Molecular programming of B cell memory.</title>
        <authorList>
            <person name="McHeyzer-Williams M."/>
            <person name="Okitsu S."/>
            <person name="Wang N."/>
            <person name="McHeyzer-Williams L."/>
        </authorList>
    </citation>
    <scope>REVIEW ON FUNCTION</scope>
</reference>
<reference key="7">
    <citation type="journal article" date="2014" name="Front. Immunol.">
        <title>Immunoglobulin and T Cell Receptor Genes: IMGT((R)) and the Birth and Rise of Immunoinformatics.</title>
        <authorList>
            <person name="Lefranc M.P."/>
        </authorList>
    </citation>
    <scope>NOMENCLATURE</scope>
</reference>
<dbReference type="EMBL" id="AC244226">
    <property type="status" value="NOT_ANNOTATED_CDS"/>
    <property type="molecule type" value="Genomic_DNA"/>
</dbReference>
<dbReference type="EMDB" id="EMD-27767"/>
<dbReference type="SMR" id="A0A0J9YVY3"/>
<dbReference type="FunCoup" id="A0A0J9YVY3">
    <property type="interactions" value="291"/>
</dbReference>
<dbReference type="IMGT_GENE-DB" id="IGHV7-4-1"/>
<dbReference type="BioMuta" id="HGNC:5665"/>
<dbReference type="jPOST" id="A0A0J9YVY3"/>
<dbReference type="MassIVE" id="A0A0J9YVY3"/>
<dbReference type="Pumba" id="A0A0J9YVY3"/>
<dbReference type="Ensembl" id="ENST00000631943.1">
    <property type="protein sequence ID" value="ENSP00000487727.1"/>
    <property type="gene ID" value="ENSG00000282122.1"/>
</dbReference>
<dbReference type="AGR" id="HGNC:5665"/>
<dbReference type="GeneCards" id="IGHV7-4-1"/>
<dbReference type="HGNC" id="HGNC:5665">
    <property type="gene designation" value="IGHV7-4-1"/>
</dbReference>
<dbReference type="HPA" id="ENSG00000282122">
    <property type="expression patterns" value="Tissue enhanced (intestine, lymphoid tissue)"/>
</dbReference>
<dbReference type="neXtProt" id="NX_A0A0J9YVY3"/>
<dbReference type="VEuPathDB" id="HostDB:ENSG00000282122"/>
<dbReference type="GeneTree" id="ENSGT00940000161255"/>
<dbReference type="InParanoid" id="A0A0J9YVY3"/>
<dbReference type="OMA" id="RFTFSMD"/>
<dbReference type="PAN-GO" id="A0A0J9YVY3">
    <property type="GO annotations" value="11 GO annotations based on evolutionary models"/>
</dbReference>
<dbReference type="ChiTaRS" id="IGHV7-4-1">
    <property type="organism name" value="human"/>
</dbReference>
<dbReference type="Pharos" id="A0A0J9YVY3">
    <property type="development level" value="Tdark"/>
</dbReference>
<dbReference type="PRO" id="PR:A0A0J9YVY3"/>
<dbReference type="Proteomes" id="UP000005640">
    <property type="component" value="Chromosome 14"/>
</dbReference>
<dbReference type="RNAct" id="A0A0J9YVY3">
    <property type="molecule type" value="protein"/>
</dbReference>
<dbReference type="Bgee" id="ENSG00000282122">
    <property type="expression patterns" value="Expressed in mucosa of transverse colon and 79 other cell types or tissues"/>
</dbReference>
<dbReference type="GO" id="GO:0005576">
    <property type="term" value="C:extracellular region"/>
    <property type="evidence" value="ECO:0007669"/>
    <property type="project" value="UniProtKB-SubCell"/>
</dbReference>
<dbReference type="GO" id="GO:0019814">
    <property type="term" value="C:immunoglobulin complex"/>
    <property type="evidence" value="ECO:0007669"/>
    <property type="project" value="UniProtKB-KW"/>
</dbReference>
<dbReference type="GO" id="GO:0005886">
    <property type="term" value="C:plasma membrane"/>
    <property type="evidence" value="ECO:0007669"/>
    <property type="project" value="UniProtKB-SubCell"/>
</dbReference>
<dbReference type="GO" id="GO:0003823">
    <property type="term" value="F:antigen binding"/>
    <property type="evidence" value="ECO:0000318"/>
    <property type="project" value="GO_Central"/>
</dbReference>
<dbReference type="GO" id="GO:0016064">
    <property type="term" value="P:immunoglobulin mediated immune response"/>
    <property type="evidence" value="ECO:0000318"/>
    <property type="project" value="GO_Central"/>
</dbReference>
<dbReference type="FunFam" id="2.60.40.10:FF:000556">
    <property type="entry name" value="Immunoglobulin heavy variable 7-81 (non-functional)"/>
    <property type="match status" value="1"/>
</dbReference>
<dbReference type="Gene3D" id="2.60.40.10">
    <property type="entry name" value="Immunoglobulins"/>
    <property type="match status" value="1"/>
</dbReference>
<dbReference type="InterPro" id="IPR007110">
    <property type="entry name" value="Ig-like_dom"/>
</dbReference>
<dbReference type="InterPro" id="IPR036179">
    <property type="entry name" value="Ig-like_dom_sf"/>
</dbReference>
<dbReference type="InterPro" id="IPR013783">
    <property type="entry name" value="Ig-like_fold"/>
</dbReference>
<dbReference type="InterPro" id="IPR013106">
    <property type="entry name" value="Ig_V-set"/>
</dbReference>
<dbReference type="InterPro" id="IPR050199">
    <property type="entry name" value="IgHV"/>
</dbReference>
<dbReference type="PANTHER" id="PTHR23266">
    <property type="entry name" value="IMMUNOGLOBULIN HEAVY CHAIN"/>
    <property type="match status" value="1"/>
</dbReference>
<dbReference type="Pfam" id="PF07686">
    <property type="entry name" value="V-set"/>
    <property type="match status" value="1"/>
</dbReference>
<dbReference type="SMART" id="SM00406">
    <property type="entry name" value="IGv"/>
    <property type="match status" value="1"/>
</dbReference>
<dbReference type="SUPFAM" id="SSF48726">
    <property type="entry name" value="Immunoglobulin"/>
    <property type="match status" value="1"/>
</dbReference>
<dbReference type="PROSITE" id="PS50835">
    <property type="entry name" value="IG_LIKE"/>
    <property type="match status" value="1"/>
</dbReference>
<protein>
    <recommendedName>
        <fullName evidence="4 9">Immunoglobulin heavy variable 7-4-1</fullName>
    </recommendedName>
</protein>
<sequence>MDWTWRILFLVAAATGAHSQVQLVQSGSELKKPGASVKVSCKASGYTFTSYAMNWVRQAPGQGLEWMGWINTNTGNPTYAQGFTGRFVFSLDTSVSTAYLQICSLKAEDTAVYYCAR</sequence>
<gene>
    <name evidence="4 9" type="primary">IGHV7-4-1</name>
</gene>
<proteinExistence type="evidence at protein level"/>
<feature type="signal peptide" evidence="2">
    <location>
        <begin position="1"/>
        <end position="19"/>
    </location>
</feature>
<feature type="chain" id="PRO_5007412548" description="Immunoglobulin heavy variable 7-4-1" evidence="2">
    <location>
        <begin position="20"/>
        <end position="117"/>
    </location>
</feature>
<feature type="domain" description="Ig-like" evidence="3">
    <location>
        <begin position="20"/>
        <end position="117" status="greater than"/>
    </location>
</feature>
<feature type="region of interest" description="Framework-1" evidence="1">
    <location>
        <begin position="20"/>
        <end position="44"/>
    </location>
</feature>
<feature type="region of interest" description="Complementarity-determining-1" evidence="1">
    <location>
        <begin position="45"/>
        <end position="52"/>
    </location>
</feature>
<feature type="region of interest" description="Framework-2" evidence="1">
    <location>
        <begin position="53"/>
        <end position="69"/>
    </location>
</feature>
<feature type="region of interest" description="Complementarity-determining-2" evidence="1">
    <location>
        <begin position="70"/>
        <end position="77"/>
    </location>
</feature>
<feature type="region of interest" description="Framework-3" evidence="1">
    <location>
        <begin position="78"/>
        <end position="115"/>
    </location>
</feature>
<feature type="region of interest" description="Complementarity-determining-3" evidence="1">
    <location>
        <begin position="116"/>
        <end position="117" status="greater than"/>
    </location>
</feature>
<feature type="disulfide bond" evidence="3">
    <location>
        <begin position="41"/>
        <end position="115"/>
    </location>
</feature>
<feature type="non-terminal residue">
    <location>
        <position position="117"/>
    </location>
</feature>
<accession>A0A0J9YVY3</accession>